<reference key="1">
    <citation type="journal article" date="2005" name="Gene">
        <title>The first complete chloroplast genome sequence of a lycophyte, Huperzia lucidula (Lycopodiaceae).</title>
        <authorList>
            <person name="Wolf P.G."/>
            <person name="Karol K.G."/>
            <person name="Mandoli D.F."/>
            <person name="Kuehl J.V."/>
            <person name="Arumuganathan K."/>
            <person name="Ellis M.W."/>
            <person name="Mishler B.D."/>
            <person name="Kelch D.G."/>
            <person name="Olmstead R.G."/>
            <person name="Boore J.L."/>
        </authorList>
    </citation>
    <scope>NUCLEOTIDE SEQUENCE [LARGE SCALE GENOMIC DNA]</scope>
</reference>
<evidence type="ECO:0000250" key="1">
    <source>
        <dbReference type="UniProtKB" id="P56785"/>
    </source>
</evidence>
<evidence type="ECO:0000255" key="2"/>
<evidence type="ECO:0000305" key="3"/>
<keyword id="KW-0150">Chloroplast</keyword>
<keyword id="KW-0472">Membrane</keyword>
<keyword id="KW-0934">Plastid</keyword>
<keyword id="KW-1001">Plastid inner membrane</keyword>
<keyword id="KW-0653">Protein transport</keyword>
<keyword id="KW-0812">Transmembrane</keyword>
<keyword id="KW-1133">Transmembrane helix</keyword>
<keyword id="KW-0813">Transport</keyword>
<accession>Q5SCY7</accession>
<gene>
    <name evidence="1" type="primary">TIC214</name>
    <name type="synonym">ycf1</name>
</gene>
<proteinExistence type="inferred from homology"/>
<geneLocation type="chloroplast"/>
<organism>
    <name type="scientific">Huperzia lucidula</name>
    <name type="common">Shining clubmoss</name>
    <name type="synonym">Lycopodium lucidulum</name>
    <dbReference type="NCBI Taxonomy" id="37429"/>
    <lineage>
        <taxon>Eukaryota</taxon>
        <taxon>Viridiplantae</taxon>
        <taxon>Streptophyta</taxon>
        <taxon>Embryophyta</taxon>
        <taxon>Tracheophyta</taxon>
        <taxon>Lycopodiopsida</taxon>
        <taxon>Lycopodiales</taxon>
        <taxon>Lycopodiaceae</taxon>
        <taxon>Huperzioideae</taxon>
        <taxon>Huperzia</taxon>
    </lineage>
</organism>
<comment type="function">
    <text evidence="1">Involved in protein precursor import into chloroplasts. May be part of an intermediate translocation complex acting as a protein-conducting channel at the inner envelope.</text>
</comment>
<comment type="subunit">
    <text evidence="1">Part of the Tic complex.</text>
</comment>
<comment type="subcellular location">
    <subcellularLocation>
        <location evidence="1">Plastid</location>
        <location evidence="1">Chloroplast inner membrane</location>
        <topology evidence="2">Multi-pass membrane protein</topology>
    </subcellularLocation>
</comment>
<comment type="similarity">
    <text evidence="3">Belongs to the TIC214 family.</text>
</comment>
<comment type="sequence caution" evidence="3">
    <conflict type="erroneous initiation">
        <sequence resource="EMBL-CDS" id="AAT80755"/>
    </conflict>
</comment>
<protein>
    <recommendedName>
        <fullName evidence="1">Protein TIC 214</fullName>
    </recommendedName>
    <alternativeName>
        <fullName evidence="1">Translocon at the inner envelope membrane of chloroplasts 214</fullName>
        <shortName evidence="1">AtTIC214</shortName>
    </alternativeName>
</protein>
<feature type="chain" id="PRO_0000262611" description="Protein TIC 214">
    <location>
        <begin position="1"/>
        <end position="1658"/>
    </location>
</feature>
<feature type="transmembrane region" description="Helical" evidence="2">
    <location>
        <begin position="28"/>
        <end position="48"/>
    </location>
</feature>
<feature type="transmembrane region" description="Helical" evidence="2">
    <location>
        <begin position="52"/>
        <end position="72"/>
    </location>
</feature>
<feature type="transmembrane region" description="Helical" evidence="2">
    <location>
        <begin position="82"/>
        <end position="102"/>
    </location>
</feature>
<feature type="transmembrane region" description="Helical" evidence="2">
    <location>
        <begin position="130"/>
        <end position="150"/>
    </location>
</feature>
<feature type="transmembrane region" description="Helical" evidence="2">
    <location>
        <begin position="165"/>
        <end position="185"/>
    </location>
</feature>
<feature type="transmembrane region" description="Helical" evidence="2">
    <location>
        <begin position="199"/>
        <end position="219"/>
    </location>
</feature>
<dbReference type="EMBL" id="AY660566">
    <property type="protein sequence ID" value="AAT80755.1"/>
    <property type="status" value="ALT_INIT"/>
    <property type="molecule type" value="Genomic_DNA"/>
</dbReference>
<dbReference type="RefSeq" id="YP_209559.1">
    <property type="nucleotide sequence ID" value="NC_006861.1"/>
</dbReference>
<dbReference type="GeneID" id="3283780"/>
<dbReference type="GO" id="GO:0009706">
    <property type="term" value="C:chloroplast inner membrane"/>
    <property type="evidence" value="ECO:0007669"/>
    <property type="project" value="UniProtKB-SubCell"/>
</dbReference>
<dbReference type="GO" id="GO:0015031">
    <property type="term" value="P:protein transport"/>
    <property type="evidence" value="ECO:0007669"/>
    <property type="project" value="UniProtKB-KW"/>
</dbReference>
<dbReference type="InterPro" id="IPR008896">
    <property type="entry name" value="TIC214"/>
</dbReference>
<dbReference type="PANTHER" id="PTHR33163:SF40">
    <property type="entry name" value="PROTEIN TIC 214"/>
    <property type="match status" value="1"/>
</dbReference>
<dbReference type="PANTHER" id="PTHR33163">
    <property type="entry name" value="PROTEIN TIC 214-RELATED"/>
    <property type="match status" value="1"/>
</dbReference>
<dbReference type="Pfam" id="PF05758">
    <property type="entry name" value="Ycf1"/>
    <property type="match status" value="3"/>
</dbReference>
<name>TI214_HUPLU</name>
<sequence>MLSVLWVLISWINISGPIPNISGSLTLFGLYYGFLAALPIGLSQILTIRAFLLGGNTGGTLAVSGSIMGQLITNLSIYYWPIYVMLLKPHAITLLVLPYMLFYWYRTKDLLYDQPPNPVESLNDAQVRQIFLDSFILSLLNPVILPSPVFARSLNLFIFRYSNKISFVISSSFGWLGGYILFINLIKLLMVRIERDSSVNYPLIKSIINQIFSIIILALRLLYLGRAPVPLFTKKIHDGFESDENQIVKSLWLNKPWPTVLFDYRKWNRPFRYIQNGPNGDSPVKKQVSQYFFDTCSSDGRQRISFTSLPSSSTFQKDLKEYLNISEISPSSEDIYDKWIHIEEKRKNNSNDGLTNRVQALDNRFLMINVTEYRNELCDHKENVSIKTYDPFLNKGFRGKIAISESPWIFDEKPLESTRRQIMLNISKRNNKLKDWIYICWQGLERKKLSLPWEPLTPDAFNSFNLIAKEVSNDEEPRTDLKQVDFYEEQTLVTLDEQNISSELFATVTEHTNDLHERTTTKSSINWEHVLNLSSKKRDYYSRYLENIKWHKLLNYWKKLFLDSSTKVRDTLFLITQAFGIRNEYQVQDVVKEMPRWTSKLANYKFDVIGITFSDVRYRKLKNFDYVFETVDQEIEIETNEPFRIVKRFSQQSDFRRNLVIGSMRARRRKTLIWNSLQLKTHSPFFLRIMDETTPLKIPLKVSNKIDTKSTFTPFTKIKQGLIPFFSDSDDEKVFAAEKTELDRLTIANKWDFASAHWGRGFPLVIQSYLRKYVVIPVLIISKNISRILLFQVPEWKEDWNEWSKEIHVKCNYDGTEVSVHQLPSLWHREGLQIKILYPFHLKPWHNSKLRQLEFLDNLDIKNFGDGDEIEKTLLYDGIKDSYTSAERKKIDYSYLTIWGNQTDSPFGNTKKQPFFWKPVIKELRKKRKRILSKITQNFKIYYKFFPLGQKSNIYNESDVPAVSKTRADKSKNNDIFEFEPDDKDKNEERDFKINNEIFDELPIGITPKSSNNLSLQNSNKIEYGTGVFTRESGNDVTPNSNEIERITKHFFDEVQTNTDSKVISDEYPNDGKKLKLRKILIKFYQQIIRLRRKSTQLIHERINSINIFSEEINRNVLKNIFYLIRFKIKLMINFVKNIFINCNEVIHSYNNIFRLQTKYDKYVNQDLIVSGKEGQDPEFNSDQGIDSVSQADVFHGVRQSKTINKSYLKNFLKYWNLYYFIGENYEKKLKVILDEKGILGVGEPQNLSEENWKDWLRCLHRCKLPSHIWCKIVPRTWKNEVTKHWKMEENFPNHFDEDIPHTFMTYSSWERIGKLNRRHKYNLLSYSYLDFAKNREIKKFPMWQSEGEQTIFNNRIREIRECQSVNNEENDKSKIYFEFKMKLWLFPELMKAKKVFGSEVILIPEISLIAEKHNKSLKDERLLEDRECHESIYQWRRTSKELERIVKKLRDIAFLTIIIENQDKFVSLPANIVENLEALVFSTRGDSVKETFQNLEFRLPRVLDDQILMYKTISTLLKFKNRFKRRLDLNTFDESIPRIEIVKNGGKTISSSYFNLEDILLPKRRMELRILNSPDLKGDENRDAELDRGTFGIKRQSYEQLIEEDRDSANKNQIIKRFLRPSYRLEDPACMNRFWFHTNNGSRFAMLRICMYPSIHD</sequence>